<keyword id="KW-0560">Oxidoreductase</keyword>
<keyword id="KW-0819">tRNA processing</keyword>
<reference key="1">
    <citation type="submission" date="2009-07" db="EMBL/GenBank/DDBJ databases">
        <title>Complete sequence of Pectobacterium carotovorum subsp. carotovorum PC1.</title>
        <authorList>
            <consortium name="US DOE Joint Genome Institute"/>
            <person name="Lucas S."/>
            <person name="Copeland A."/>
            <person name="Lapidus A."/>
            <person name="Glavina del Rio T."/>
            <person name="Tice H."/>
            <person name="Bruce D."/>
            <person name="Goodwin L."/>
            <person name="Pitluck S."/>
            <person name="Munk A.C."/>
            <person name="Brettin T."/>
            <person name="Detter J.C."/>
            <person name="Han C."/>
            <person name="Tapia R."/>
            <person name="Larimer F."/>
            <person name="Land M."/>
            <person name="Hauser L."/>
            <person name="Kyrpides N."/>
            <person name="Mikhailova N."/>
            <person name="Balakrishnan V."/>
            <person name="Glasner J."/>
            <person name="Perna N.T."/>
        </authorList>
    </citation>
    <scope>NUCLEOTIDE SEQUENCE [LARGE SCALE GENOMIC DNA]</scope>
    <source>
        <strain>PC1</strain>
    </source>
</reference>
<sequence>MPVLHNRISNEELKARMLAETEPRTTVSFYKYFTIDDPKAFRDRLYIQLEQCKVLGRIYIATEGINAQISVPNNQFDAFKAVLFSAHPALDQIRLNIALEDDGKSFWVLRMKVRERIVADGIDDPTFNPANVGQYLKADQVNAMADDPDTVFVDMRNHYEYEVGHFENALEVPSDTFREQLPMAVEMLDEARDKNIVMYCTGGIRCEKASAYMLHHGFKNVYHVEGGIIEYARQAKAQGLPLKFIGKNFVFDERMGERISDDVIAHCHQCGASCDSHTNCRNEGCHLLFIQCPTCAAKYEGCCSTQCLDEMKLPLEEQRAIRSGRENGMKIFNKSKGLLQSTLHIPAPEVKDKAE</sequence>
<gene>
    <name evidence="1" type="primary">trhO</name>
    <name type="ordered locus">PC1_2519</name>
</gene>
<evidence type="ECO:0000255" key="1">
    <source>
        <dbReference type="HAMAP-Rule" id="MF_00469"/>
    </source>
</evidence>
<accession>C6DKU9</accession>
<feature type="chain" id="PRO_1000206338" description="tRNA uridine(34) hydroxylase">
    <location>
        <begin position="1"/>
        <end position="355"/>
    </location>
</feature>
<feature type="domain" description="Rhodanese" evidence="1">
    <location>
        <begin position="146"/>
        <end position="240"/>
    </location>
</feature>
<feature type="active site" description="Cysteine persulfide intermediate" evidence="1">
    <location>
        <position position="200"/>
    </location>
</feature>
<name>TRHO_PECCP</name>
<proteinExistence type="inferred from homology"/>
<dbReference type="EC" id="1.14.-.-" evidence="1"/>
<dbReference type="EMBL" id="CP001657">
    <property type="protein sequence ID" value="ACT13550.1"/>
    <property type="molecule type" value="Genomic_DNA"/>
</dbReference>
<dbReference type="RefSeq" id="WP_015840725.1">
    <property type="nucleotide sequence ID" value="NC_012917.1"/>
</dbReference>
<dbReference type="SMR" id="C6DKU9"/>
<dbReference type="STRING" id="561230.PC1_2519"/>
<dbReference type="KEGG" id="pct:PC1_2519"/>
<dbReference type="eggNOG" id="COG1054">
    <property type="taxonomic scope" value="Bacteria"/>
</dbReference>
<dbReference type="HOGENOM" id="CLU_038878_1_1_6"/>
<dbReference type="OrthoDB" id="9778326at2"/>
<dbReference type="Proteomes" id="UP000002736">
    <property type="component" value="Chromosome"/>
</dbReference>
<dbReference type="GO" id="GO:0016705">
    <property type="term" value="F:oxidoreductase activity, acting on paired donors, with incorporation or reduction of molecular oxygen"/>
    <property type="evidence" value="ECO:0007669"/>
    <property type="project" value="UniProtKB-UniRule"/>
</dbReference>
<dbReference type="GO" id="GO:0006400">
    <property type="term" value="P:tRNA modification"/>
    <property type="evidence" value="ECO:0007669"/>
    <property type="project" value="UniProtKB-UniRule"/>
</dbReference>
<dbReference type="CDD" id="cd01518">
    <property type="entry name" value="RHOD_YceA"/>
    <property type="match status" value="1"/>
</dbReference>
<dbReference type="Gene3D" id="3.30.70.100">
    <property type="match status" value="1"/>
</dbReference>
<dbReference type="Gene3D" id="3.40.250.10">
    <property type="entry name" value="Rhodanese-like domain"/>
    <property type="match status" value="1"/>
</dbReference>
<dbReference type="HAMAP" id="MF_00469">
    <property type="entry name" value="TrhO"/>
    <property type="match status" value="1"/>
</dbReference>
<dbReference type="InterPro" id="IPR001763">
    <property type="entry name" value="Rhodanese-like_dom"/>
</dbReference>
<dbReference type="InterPro" id="IPR036873">
    <property type="entry name" value="Rhodanese-like_dom_sf"/>
</dbReference>
<dbReference type="InterPro" id="IPR022111">
    <property type="entry name" value="Rhodanese_C"/>
</dbReference>
<dbReference type="InterPro" id="IPR020936">
    <property type="entry name" value="TrhO"/>
</dbReference>
<dbReference type="InterPro" id="IPR040503">
    <property type="entry name" value="TRHO_N"/>
</dbReference>
<dbReference type="NCBIfam" id="NF001133">
    <property type="entry name" value="PRK00142.1-1"/>
    <property type="match status" value="1"/>
</dbReference>
<dbReference type="PANTHER" id="PTHR43846:SF1">
    <property type="entry name" value="TRNA URIDINE(34) HYDROXYLASE"/>
    <property type="match status" value="1"/>
</dbReference>
<dbReference type="PANTHER" id="PTHR43846">
    <property type="entry name" value="UPF0176 PROTEIN YCEA"/>
    <property type="match status" value="1"/>
</dbReference>
<dbReference type="Pfam" id="PF00581">
    <property type="entry name" value="Rhodanese"/>
    <property type="match status" value="1"/>
</dbReference>
<dbReference type="Pfam" id="PF12368">
    <property type="entry name" value="Rhodanese_C"/>
    <property type="match status" value="1"/>
</dbReference>
<dbReference type="Pfam" id="PF17773">
    <property type="entry name" value="UPF0176_N"/>
    <property type="match status" value="1"/>
</dbReference>
<dbReference type="SMART" id="SM00450">
    <property type="entry name" value="RHOD"/>
    <property type="match status" value="1"/>
</dbReference>
<dbReference type="SUPFAM" id="SSF52821">
    <property type="entry name" value="Rhodanese/Cell cycle control phosphatase"/>
    <property type="match status" value="1"/>
</dbReference>
<dbReference type="PROSITE" id="PS50206">
    <property type="entry name" value="RHODANESE_3"/>
    <property type="match status" value="1"/>
</dbReference>
<protein>
    <recommendedName>
        <fullName evidence="1">tRNA uridine(34) hydroxylase</fullName>
        <ecNumber evidence="1">1.14.-.-</ecNumber>
    </recommendedName>
    <alternativeName>
        <fullName evidence="1">tRNA hydroxylation protein O</fullName>
    </alternativeName>
</protein>
<organism>
    <name type="scientific">Pectobacterium carotovorum subsp. carotovorum (strain PC1)</name>
    <dbReference type="NCBI Taxonomy" id="561230"/>
    <lineage>
        <taxon>Bacteria</taxon>
        <taxon>Pseudomonadati</taxon>
        <taxon>Pseudomonadota</taxon>
        <taxon>Gammaproteobacteria</taxon>
        <taxon>Enterobacterales</taxon>
        <taxon>Pectobacteriaceae</taxon>
        <taxon>Pectobacterium</taxon>
    </lineage>
</organism>
<comment type="function">
    <text evidence="1">Catalyzes oxygen-dependent 5-hydroxyuridine (ho5U) modification at position 34 in tRNAs.</text>
</comment>
<comment type="catalytic activity">
    <reaction evidence="1">
        <text>uridine(34) in tRNA + AH2 + O2 = 5-hydroxyuridine(34) in tRNA + A + H2O</text>
        <dbReference type="Rhea" id="RHEA:64224"/>
        <dbReference type="Rhea" id="RHEA-COMP:11727"/>
        <dbReference type="Rhea" id="RHEA-COMP:13381"/>
        <dbReference type="ChEBI" id="CHEBI:13193"/>
        <dbReference type="ChEBI" id="CHEBI:15377"/>
        <dbReference type="ChEBI" id="CHEBI:15379"/>
        <dbReference type="ChEBI" id="CHEBI:17499"/>
        <dbReference type="ChEBI" id="CHEBI:65315"/>
        <dbReference type="ChEBI" id="CHEBI:136877"/>
    </reaction>
</comment>
<comment type="similarity">
    <text evidence="1">Belongs to the TrhO family.</text>
</comment>